<reference key="1">
    <citation type="submission" date="2000-12" db="EMBL/GenBank/DDBJ databases">
        <title>Ion channels in ocular epithelia.</title>
        <authorList>
            <person name="Rae J.L."/>
        </authorList>
    </citation>
    <scope>NUCLEOTIDE SEQUENCE [MRNA]</scope>
    <source>
        <tissue>Lens epithelium</tissue>
    </source>
</reference>
<comment type="function">
    <text evidence="2 3">Pore-forming subunit of the voltage-gated potassium (Kv) M-channel which is responsible for the M-current, a key controller of neuronal excitability. M-channel is composed of pore-forming subunits KCNQ2 and KCNQ3 assembled as heterotetramers (By similarity). The native M-current has a slowly activating and deactivating potassium conductance which plays a critical role in determining the subthreshold electrical excitability of neurons as well as the responsiveness to synaptic inputs. M-channel is selectively permeable in vitro to other cations besides potassium, in decreasing order of affinity K(+) &gt; Rb(+) &gt; Cs(+) &gt; Na(+). M-channel association with SLC5A3/SMIT1 alters channel ion selectivity, increasing Na(+) and Cs(+) permeation relative to K(+). Suppressed by activation of M1 muscarinic acetylcholine receptors. KCNQ3 also associates with KCNQ5 to form a functional channel in vitro and may also contribute to the M-current in brain (By similarity).</text>
</comment>
<comment type="catalytic activity">
    <reaction evidence="2">
        <text>K(+)(in) = K(+)(out)</text>
        <dbReference type="Rhea" id="RHEA:29463"/>
        <dbReference type="ChEBI" id="CHEBI:29103"/>
    </reaction>
</comment>
<comment type="catalytic activity">
    <reaction evidence="2">
        <text>Rb(+)(in) = Rb(+)(out)</text>
        <dbReference type="Rhea" id="RHEA:78547"/>
        <dbReference type="ChEBI" id="CHEBI:49847"/>
    </reaction>
</comment>
<comment type="catalytic activity">
    <reaction evidence="2">
        <text>Cs(+)(in) = Cs(+)(out)</text>
        <dbReference type="Rhea" id="RHEA:78555"/>
        <dbReference type="ChEBI" id="CHEBI:49547"/>
    </reaction>
</comment>
<comment type="catalytic activity">
    <reaction evidence="2">
        <text>Na(+)(in) = Na(+)(out)</text>
        <dbReference type="Rhea" id="RHEA:34963"/>
        <dbReference type="ChEBI" id="CHEBI:29101"/>
    </reaction>
</comment>
<comment type="activity regulation">
    <text evidence="3 4">Phosphatidylinositol-4,5-bisphosphate (PIP2) potentiates the activation of KCNQ channels by enhancing the electro-mechanical coupling of the voltage-sensing domain (VSD) and the pore-forming domain (PD). In the closed state of the channel, PIP2 is anchored at the S2-S3 loop; upon channel activation, PIP2 interacts with the S4-S5 linker and is involved in channel gating (By similarity). Calcium suppresses KCNQ2-KCNQ3 channel currents, with calcium-bound calmodulin inducing a change in channel configuration which leads to the reduction of channel affinity for PIP2 and subsequent current suppression (By similarity).</text>
</comment>
<comment type="subunit">
    <text evidence="2 5">Heterotetramer with KCNQ2; forms heterotetrameric native M-channel responsible for the M-current. Interacts with calmodulin; the interaction is calcium-independent, constitutive and participates in the proper assembly of a functional M-channel. Heteromultimer with KCNQ5. May associate with KCNE2 (By similarity). Interacts with IQCJ-SCHIP1 (By similarity). Interacts (via the pore module) with SLC5A3/SMIT1; forms a coregulatory complex that alters ion selectivity, voltage dependence and gating kinetics of the channel (By similarity).</text>
</comment>
<comment type="subcellular location">
    <subcellularLocation>
        <location evidence="2">Cell membrane</location>
        <topology evidence="6">Multi-pass membrane protein</topology>
    </subcellularLocation>
</comment>
<comment type="domain">
    <text evidence="3">Each subunit contains six transmembrane segments (S1-S6) with S1-S4 forming one voltage sensing domain (VSD) and S5-S6 contributing to form one quarter of an interlocking pore-forming domain (PD).</text>
</comment>
<comment type="domain">
    <text evidence="3">The S4-S5 linker preferentially interacts with PIP2 in the open-state KCNQ2 channel, whereas the S2-S3 loop interacts with PIP2 in the closed state.</text>
</comment>
<comment type="domain">
    <text evidence="2">The intracellular C-terminal domain is bound constitutively by calmodulin (CaM). This domain plays key functions in channel tetramerization, trafficking, and gating.</text>
</comment>
<comment type="PTM">
    <text evidence="2">KCNQ2/KCNQ3 are ubiquitinated by NEDD4L. Ubiquitination leads to protein degradation. Degradation induced by NEDD4L is inhibited by USP36.</text>
</comment>
<comment type="similarity">
    <text evidence="8">Belongs to the potassium channel family. KQT (TC 1.A.1.15) subfamily. Kv7.3/KCNQ3 sub-subfamily.</text>
</comment>
<name>KCNQ3_BOVIN</name>
<organism>
    <name type="scientific">Bos taurus</name>
    <name type="common">Bovine</name>
    <dbReference type="NCBI Taxonomy" id="9913"/>
    <lineage>
        <taxon>Eukaryota</taxon>
        <taxon>Metazoa</taxon>
        <taxon>Chordata</taxon>
        <taxon>Craniata</taxon>
        <taxon>Vertebrata</taxon>
        <taxon>Euteleostomi</taxon>
        <taxon>Mammalia</taxon>
        <taxon>Eutheria</taxon>
        <taxon>Laurasiatheria</taxon>
        <taxon>Artiodactyla</taxon>
        <taxon>Ruminantia</taxon>
        <taxon>Pecora</taxon>
        <taxon>Bovidae</taxon>
        <taxon>Bovinae</taxon>
        <taxon>Bos</taxon>
    </lineage>
</organism>
<gene>
    <name evidence="2" type="primary">KCNQ3</name>
</gene>
<proteinExistence type="evidence at transcript level"/>
<keyword id="KW-1003">Cell membrane</keyword>
<keyword id="KW-0407">Ion channel</keyword>
<keyword id="KW-0406">Ion transport</keyword>
<keyword id="KW-0472">Membrane</keyword>
<keyword id="KW-0597">Phosphoprotein</keyword>
<keyword id="KW-0630">Potassium</keyword>
<keyword id="KW-0631">Potassium channel</keyword>
<keyword id="KW-0633">Potassium transport</keyword>
<keyword id="KW-1185">Reference proteome</keyword>
<keyword id="KW-0812">Transmembrane</keyword>
<keyword id="KW-1133">Transmembrane helix</keyword>
<keyword id="KW-0813">Transport</keyword>
<keyword id="KW-0832">Ubl conjugation</keyword>
<keyword id="KW-0851">Voltage-gated channel</keyword>
<dbReference type="EMBL" id="AF325548">
    <property type="protein sequence ID" value="AAK11221.1"/>
    <property type="molecule type" value="mRNA"/>
</dbReference>
<dbReference type="RefSeq" id="NP_776799.1">
    <property type="nucleotide sequence ID" value="NM_174374.2"/>
</dbReference>
<dbReference type="SMR" id="P58126"/>
<dbReference type="FunCoup" id="P58126">
    <property type="interactions" value="799"/>
</dbReference>
<dbReference type="STRING" id="9913.ENSBTAP00000027546"/>
<dbReference type="PaxDb" id="9913-ENSBTAP00000027546"/>
<dbReference type="Ensembl" id="ENSBTAT00000027546.7">
    <property type="protein sequence ID" value="ENSBTAP00000027546.5"/>
    <property type="gene ID" value="ENSBTAG00000020667.7"/>
</dbReference>
<dbReference type="GeneID" id="281884"/>
<dbReference type="KEGG" id="bta:281884"/>
<dbReference type="CTD" id="3786"/>
<dbReference type="VEuPathDB" id="HostDB:ENSBTAG00000020667"/>
<dbReference type="VGNC" id="VGNC:30488">
    <property type="gene designation" value="KCNQ3"/>
</dbReference>
<dbReference type="eggNOG" id="KOG1419">
    <property type="taxonomic scope" value="Eukaryota"/>
</dbReference>
<dbReference type="GeneTree" id="ENSGT00940000159760"/>
<dbReference type="HOGENOM" id="CLU_011722_8_2_1"/>
<dbReference type="InParanoid" id="P58126"/>
<dbReference type="OMA" id="QDRDDYM"/>
<dbReference type="OrthoDB" id="8879391at2759"/>
<dbReference type="TreeFam" id="TF315186"/>
<dbReference type="Reactome" id="R-BTA-1296072">
    <property type="pathway name" value="Voltage gated Potassium channels"/>
</dbReference>
<dbReference type="Proteomes" id="UP000009136">
    <property type="component" value="Chromosome 14"/>
</dbReference>
<dbReference type="Bgee" id="ENSBTAG00000020667">
    <property type="expression patterns" value="Expressed in prefrontal cortex and 34 other cell types or tissues"/>
</dbReference>
<dbReference type="GO" id="GO:0043194">
    <property type="term" value="C:axon initial segment"/>
    <property type="evidence" value="ECO:0007669"/>
    <property type="project" value="Ensembl"/>
</dbReference>
<dbReference type="GO" id="GO:0009986">
    <property type="term" value="C:cell surface"/>
    <property type="evidence" value="ECO:0007669"/>
    <property type="project" value="Ensembl"/>
</dbReference>
<dbReference type="GO" id="GO:0005739">
    <property type="term" value="C:mitochondrion"/>
    <property type="evidence" value="ECO:0007669"/>
    <property type="project" value="GOC"/>
</dbReference>
<dbReference type="GO" id="GO:0033268">
    <property type="term" value="C:node of Ranvier"/>
    <property type="evidence" value="ECO:0007669"/>
    <property type="project" value="Ensembl"/>
</dbReference>
<dbReference type="GO" id="GO:0005886">
    <property type="term" value="C:plasma membrane"/>
    <property type="evidence" value="ECO:0000250"/>
    <property type="project" value="UniProtKB"/>
</dbReference>
<dbReference type="GO" id="GO:0045202">
    <property type="term" value="C:synapse"/>
    <property type="evidence" value="ECO:0007669"/>
    <property type="project" value="GOC"/>
</dbReference>
<dbReference type="GO" id="GO:0008076">
    <property type="term" value="C:voltage-gated potassium channel complex"/>
    <property type="evidence" value="ECO:0000250"/>
    <property type="project" value="UniProtKB"/>
</dbReference>
<dbReference type="GO" id="GO:0005516">
    <property type="term" value="F:calmodulin binding"/>
    <property type="evidence" value="ECO:0000250"/>
    <property type="project" value="UniProtKB"/>
</dbReference>
<dbReference type="GO" id="GO:0022843">
    <property type="term" value="F:voltage-gated monoatomic cation channel activity"/>
    <property type="evidence" value="ECO:0000250"/>
    <property type="project" value="UniProtKB"/>
</dbReference>
<dbReference type="GO" id="GO:0005249">
    <property type="term" value="F:voltage-gated potassium channel activity"/>
    <property type="evidence" value="ECO:0000250"/>
    <property type="project" value="UniProtKB"/>
</dbReference>
<dbReference type="GO" id="GO:0099610">
    <property type="term" value="P:action potential initiation"/>
    <property type="evidence" value="ECO:0007669"/>
    <property type="project" value="Ensembl"/>
</dbReference>
<dbReference type="GO" id="GO:0097314">
    <property type="term" value="P:apoptosome assembly"/>
    <property type="evidence" value="ECO:0007669"/>
    <property type="project" value="Ensembl"/>
</dbReference>
<dbReference type="GO" id="GO:0071277">
    <property type="term" value="P:cellular response to calcium ion"/>
    <property type="evidence" value="ECO:0007669"/>
    <property type="project" value="Ensembl"/>
</dbReference>
<dbReference type="GO" id="GO:0071466">
    <property type="term" value="P:cellular response to xenobiotic stimulus"/>
    <property type="evidence" value="ECO:0007669"/>
    <property type="project" value="Ensembl"/>
</dbReference>
<dbReference type="GO" id="GO:0006897">
    <property type="term" value="P:endocytosis"/>
    <property type="evidence" value="ECO:0007669"/>
    <property type="project" value="Ensembl"/>
</dbReference>
<dbReference type="GO" id="GO:0098976">
    <property type="term" value="P:excitatory chemical synaptic transmission"/>
    <property type="evidence" value="ECO:0007669"/>
    <property type="project" value="Ensembl"/>
</dbReference>
<dbReference type="GO" id="GO:0006887">
    <property type="term" value="P:exocytosis"/>
    <property type="evidence" value="ECO:0007669"/>
    <property type="project" value="Ensembl"/>
</dbReference>
<dbReference type="GO" id="GO:0010467">
    <property type="term" value="P:gene expression"/>
    <property type="evidence" value="ECO:0007669"/>
    <property type="project" value="Ensembl"/>
</dbReference>
<dbReference type="GO" id="GO:0098977">
    <property type="term" value="P:inhibitory chemical synaptic transmission"/>
    <property type="evidence" value="ECO:0007669"/>
    <property type="project" value="Ensembl"/>
</dbReference>
<dbReference type="GO" id="GO:0060081">
    <property type="term" value="P:membrane hyperpolarization"/>
    <property type="evidence" value="ECO:0007669"/>
    <property type="project" value="Ensembl"/>
</dbReference>
<dbReference type="GO" id="GO:0051882">
    <property type="term" value="P:mitochondrial depolarization"/>
    <property type="evidence" value="ECO:0007669"/>
    <property type="project" value="Ensembl"/>
</dbReference>
<dbReference type="GO" id="GO:0021675">
    <property type="term" value="P:nerve development"/>
    <property type="evidence" value="ECO:0007669"/>
    <property type="project" value="Ensembl"/>
</dbReference>
<dbReference type="GO" id="GO:0051402">
    <property type="term" value="P:neuron apoptotic process"/>
    <property type="evidence" value="ECO:0007669"/>
    <property type="project" value="Ensembl"/>
</dbReference>
<dbReference type="GO" id="GO:0016322">
    <property type="term" value="P:neuron remodeling"/>
    <property type="evidence" value="ECO:0007669"/>
    <property type="project" value="Ensembl"/>
</dbReference>
<dbReference type="GO" id="GO:0019228">
    <property type="term" value="P:neuronal action potential"/>
    <property type="evidence" value="ECO:0007669"/>
    <property type="project" value="Ensembl"/>
</dbReference>
<dbReference type="GO" id="GO:0071805">
    <property type="term" value="P:potassium ion transmembrane transport"/>
    <property type="evidence" value="ECO:0000250"/>
    <property type="project" value="UniProtKB"/>
</dbReference>
<dbReference type="GO" id="GO:0006606">
    <property type="term" value="P:protein import into nucleus"/>
    <property type="evidence" value="ECO:0007669"/>
    <property type="project" value="Ensembl"/>
</dbReference>
<dbReference type="GO" id="GO:0006605">
    <property type="term" value="P:protein targeting"/>
    <property type="evidence" value="ECO:0007669"/>
    <property type="project" value="Ensembl"/>
</dbReference>
<dbReference type="GO" id="GO:0036343">
    <property type="term" value="P:psychomotor behavior"/>
    <property type="evidence" value="ECO:0007669"/>
    <property type="project" value="Ensembl"/>
</dbReference>
<dbReference type="GO" id="GO:0099611">
    <property type="term" value="P:regulation of action potential firing threshold"/>
    <property type="evidence" value="ECO:0007669"/>
    <property type="project" value="Ensembl"/>
</dbReference>
<dbReference type="GO" id="GO:0048167">
    <property type="term" value="P:regulation of synaptic plasticity"/>
    <property type="evidence" value="ECO:0007669"/>
    <property type="project" value="Ensembl"/>
</dbReference>
<dbReference type="GO" id="GO:0010996">
    <property type="term" value="P:response to auditory stimulus"/>
    <property type="evidence" value="ECO:0007669"/>
    <property type="project" value="Ensembl"/>
</dbReference>
<dbReference type="GO" id="GO:0007605">
    <property type="term" value="P:sensory perception of sound"/>
    <property type="evidence" value="ECO:0007669"/>
    <property type="project" value="Ensembl"/>
</dbReference>
<dbReference type="GO" id="GO:1903701">
    <property type="term" value="P:substantia propria of cornea development"/>
    <property type="evidence" value="ECO:0007669"/>
    <property type="project" value="Ensembl"/>
</dbReference>
<dbReference type="FunFam" id="1.20.120.350:FF:000017">
    <property type="entry name" value="potassium voltage-gated channel subfamily KQT member 1"/>
    <property type="match status" value="1"/>
</dbReference>
<dbReference type="FunFam" id="1.10.287.70:FF:000016">
    <property type="entry name" value="Putative potassium voltage-gated channel subfamily KQT member 2"/>
    <property type="match status" value="1"/>
</dbReference>
<dbReference type="Gene3D" id="1.10.287.70">
    <property type="match status" value="1"/>
</dbReference>
<dbReference type="Gene3D" id="6.10.140.1910">
    <property type="match status" value="2"/>
</dbReference>
<dbReference type="InterPro" id="IPR020969">
    <property type="entry name" value="Ankyrin-G_BS"/>
</dbReference>
<dbReference type="InterPro" id="IPR005821">
    <property type="entry name" value="Ion_trans_dom"/>
</dbReference>
<dbReference type="InterPro" id="IPR003937">
    <property type="entry name" value="K_chnl_volt-dep_KCNQ"/>
</dbReference>
<dbReference type="InterPro" id="IPR003948">
    <property type="entry name" value="K_chnl_volt-dep_KCNQ3"/>
</dbReference>
<dbReference type="InterPro" id="IPR013821">
    <property type="entry name" value="K_chnl_volt-dep_KCNQ_C"/>
</dbReference>
<dbReference type="PANTHER" id="PTHR47735:SF11">
    <property type="entry name" value="POTASSIUM VOLTAGE-GATED CHANNEL SUBFAMILY KQT MEMBER 3"/>
    <property type="match status" value="1"/>
</dbReference>
<dbReference type="PANTHER" id="PTHR47735">
    <property type="entry name" value="POTASSIUM VOLTAGE-GATED CHANNEL SUBFAMILY KQT MEMBER 4"/>
    <property type="match status" value="1"/>
</dbReference>
<dbReference type="Pfam" id="PF00520">
    <property type="entry name" value="Ion_trans"/>
    <property type="match status" value="1"/>
</dbReference>
<dbReference type="Pfam" id="PF03520">
    <property type="entry name" value="KCNQ_channel"/>
    <property type="match status" value="1"/>
</dbReference>
<dbReference type="Pfam" id="PF11956">
    <property type="entry name" value="KCNQC3-Ank-G_bd"/>
    <property type="match status" value="1"/>
</dbReference>
<dbReference type="PRINTS" id="PR00169">
    <property type="entry name" value="KCHANNEL"/>
</dbReference>
<dbReference type="PRINTS" id="PR01462">
    <property type="entry name" value="KCNQ3CHANNEL"/>
</dbReference>
<dbReference type="PRINTS" id="PR01459">
    <property type="entry name" value="KCNQCHANNEL"/>
</dbReference>
<dbReference type="SUPFAM" id="SSF81324">
    <property type="entry name" value="Voltage-gated potassium channels"/>
    <property type="match status" value="1"/>
</dbReference>
<feature type="chain" id="PRO_0000054033" description="Potassium voltage-gated channel subfamily KQT member 3">
    <location>
        <begin position="1"/>
        <end position="866"/>
    </location>
</feature>
<feature type="topological domain" description="Cytoplasmic" evidence="8">
    <location>
        <begin position="1"/>
        <end position="120"/>
    </location>
</feature>
<feature type="transmembrane region" description="Helical; Name=Segment S1" evidence="3">
    <location>
        <begin position="121"/>
        <end position="143"/>
    </location>
</feature>
<feature type="topological domain" description="Extracellular" evidence="8">
    <location>
        <begin position="144"/>
        <end position="153"/>
    </location>
</feature>
<feature type="transmembrane region" description="Helical; Name=Segment S2" evidence="3">
    <location>
        <begin position="154"/>
        <end position="175"/>
    </location>
</feature>
<feature type="topological domain" description="Cytoplasmic" evidence="8">
    <location>
        <begin position="176"/>
        <end position="193"/>
    </location>
</feature>
<feature type="transmembrane region" description="Helical; Name=Segment S3" evidence="3">
    <location>
        <begin position="194"/>
        <end position="213"/>
    </location>
</feature>
<feature type="topological domain" description="Extracellular" evidence="8">
    <location>
        <begin position="214"/>
        <end position="225"/>
    </location>
</feature>
<feature type="transmembrane region" description="Helical; Voltage-sensor; Name=Segment S4" evidence="3">
    <location>
        <begin position="226"/>
        <end position="244"/>
    </location>
</feature>
<feature type="topological domain" description="Cytoplasmic" evidence="8">
    <location>
        <begin position="245"/>
        <end position="256"/>
    </location>
</feature>
<feature type="transmembrane region" description="Helical; Name=Segment S5" evidence="3">
    <location>
        <begin position="257"/>
        <end position="282"/>
    </location>
</feature>
<feature type="topological domain" description="Extracellular" evidence="8">
    <location>
        <begin position="283"/>
        <end position="302"/>
    </location>
</feature>
<feature type="intramembrane region" description="Pore-forming; Name=Segment H5" evidence="3">
    <location>
        <begin position="303"/>
        <end position="315"/>
    </location>
</feature>
<feature type="topological domain" description="Extracellular" evidence="8">
    <location>
        <begin position="316"/>
        <end position="326"/>
    </location>
</feature>
<feature type="transmembrane region" description="Helical; Name=Segment S6" evidence="3">
    <location>
        <begin position="327"/>
        <end position="353"/>
    </location>
</feature>
<feature type="topological domain" description="Cytoplasmic" evidence="8">
    <location>
        <begin position="354"/>
        <end position="866"/>
    </location>
</feature>
<feature type="region of interest" description="Disordered" evidence="7">
    <location>
        <begin position="1"/>
        <end position="42"/>
    </location>
</feature>
<feature type="region of interest" description="Mediates interaction with calmodulin" evidence="2">
    <location>
        <begin position="356"/>
        <end position="537"/>
    </location>
</feature>
<feature type="region of interest" description="Disordered" evidence="7">
    <location>
        <begin position="574"/>
        <end position="617"/>
    </location>
</feature>
<feature type="region of interest" description="Disordered" evidence="7">
    <location>
        <begin position="656"/>
        <end position="676"/>
    </location>
</feature>
<feature type="region of interest" description="Disordered" evidence="7">
    <location>
        <begin position="757"/>
        <end position="866"/>
    </location>
</feature>
<feature type="short sequence motif" description="Selectivity filter" evidence="1">
    <location>
        <begin position="316"/>
        <end position="321"/>
    </location>
</feature>
<feature type="compositionally biased region" description="Gly residues" evidence="7">
    <location>
        <begin position="11"/>
        <end position="25"/>
    </location>
</feature>
<feature type="compositionally biased region" description="Low complexity" evidence="7">
    <location>
        <begin position="26"/>
        <end position="36"/>
    </location>
</feature>
<feature type="compositionally biased region" description="Polar residues" evidence="7">
    <location>
        <begin position="837"/>
        <end position="866"/>
    </location>
</feature>
<feature type="binding site" evidence="3">
    <location>
        <position position="243"/>
    </location>
    <ligand>
        <name>a 1,2-diacyl-sn-glycero-3-phospho-(1D-myo-inositol-4,5-bisphosphate)</name>
        <dbReference type="ChEBI" id="CHEBI:58456"/>
    </ligand>
</feature>
<feature type="binding site" evidence="3">
    <location>
        <position position="259"/>
    </location>
    <ligand>
        <name>a 1,2-diacyl-sn-glycero-3-phospho-(1D-myo-inositol-4,5-bisphosphate)</name>
        <dbReference type="ChEBI" id="CHEBI:58456"/>
    </ligand>
</feature>
<feature type="binding site" evidence="3">
    <location>
        <position position="366"/>
    </location>
    <ligand>
        <name>a 1,2-diacyl-sn-glycero-3-phospho-(1D-myo-inositol-4,5-bisphosphate)</name>
        <dbReference type="ChEBI" id="CHEBI:58456"/>
    </ligand>
</feature>
<feature type="modified residue" description="Phosphothreonine" evidence="4">
    <location>
        <position position="81"/>
    </location>
</feature>
<protein>
    <recommendedName>
        <fullName evidence="8">Potassium voltage-gated channel subfamily KQT member 3</fullName>
    </recommendedName>
    <alternativeName>
        <fullName>KQT-like 3</fullName>
    </alternativeName>
    <alternativeName>
        <fullName>Potassium channel subunit alpha KvLQT3</fullName>
    </alternativeName>
    <alternativeName>
        <fullName>Voltage-gated potassium channel subunit Kv7.3</fullName>
    </alternativeName>
</protein>
<sequence>MGLKARRPAGAAGGGGDGGGGGGGAANPAGGDAAAAGDEERKVGLAPGDVEQVTLALGAGADKDGTLLLEGGGRDEGQRRTPQGIGLLAKTPLSRPVKRNNAKYRRIQTLIYDALERPRGWALLYHALVFLIVLGCLILAVLTTFREYETVSGDWLLLLETFAIFIFGAEFALRIWAAGCCCRYKGWRGRLKFARKPLCMLDIFVLIASVPVVAVGNQGNVLATSLRSLRFLQILRMLRMDRRGGTWKLLGSAICAHSKELITAWYIGFLTLILSSFLVYLVEKDVPEVDAQGEEMKEEFETYADALWWGLITLATIGYGDKTPKTWEGRLIAATFSLIGVSFFALPAGILGSGLALKVQEQHRQKHFEKRRKPAAELIQAAWRYYATNPNRIDLVATWRFYESVVSFPFFRKEQLDPAASQKLGLLDRVRLSNPRGSNTKGKLFTPLNVDAIEESPSKEPKPVGSNNKERFRTAFRMKAYAFWQSSEDAGTGDPTAEDRGYGNDFLIEDMIPTLKAAIRAVRILQFRLYKKKFKETLRPYDVKDVIEQYSAGHLDMLSRIKYLQTRIDMIFTPGPPSTPKHKKSQRGAAFTYPSQQSPRNEPYVARPSTSETEDQSMMGKFVKVERQVHDMGKKLDFLVDMHLQHMERLQVHVAGFSPSKGASSPAEAEQKEDRRDADLKTIICNYSETGAPDAPYSFHQVPVDKVGPYGFFAHDPVNLPLGGPSSGKGHATPYAERPTVLPILTLLDSRGSYRSQVELHGPCSDRVSPRQRRSITRDSDTPLSLMSVNHEELERSPSGFSISQDRDDYAFGPSGGSSWMREKRYLAEGETDTDTEPFTPSGSLPLSSTGDGISDSIWTPSGKPT</sequence>
<evidence type="ECO:0000250" key="1"/>
<evidence type="ECO:0000250" key="2">
    <source>
        <dbReference type="UniProtKB" id="O43525"/>
    </source>
</evidence>
<evidence type="ECO:0000250" key="3">
    <source>
        <dbReference type="UniProtKB" id="O43526"/>
    </source>
</evidence>
<evidence type="ECO:0000250" key="4">
    <source>
        <dbReference type="UniProtKB" id="O88944"/>
    </source>
</evidence>
<evidence type="ECO:0000250" key="5">
    <source>
        <dbReference type="UniProtKB" id="Q8K3F6"/>
    </source>
</evidence>
<evidence type="ECO:0000255" key="6"/>
<evidence type="ECO:0000256" key="7">
    <source>
        <dbReference type="SAM" id="MobiDB-lite"/>
    </source>
</evidence>
<evidence type="ECO:0000305" key="8"/>
<accession>P58126</accession>